<sequence length="191" mass="21509">MSSQHFQGRFEVEFKYRLSDVDAFTCALAALNPEVMLEDNQEQDSYFDTPEHSLAAEGKSLVIRTMQPSGIQLWIVKGPEADRCEAVNITDADKAASMLRTLGYRQVLAISKRRSIYFVGPFHVTRDHLEGIGDFAELAIMTDDEALLPDYRQQLQDLATRLGLSSAQLETRSYRTLCEQSLTLNSEKVPS</sequence>
<accession>O69199</accession>
<feature type="initiator methionine" description="Removed" evidence="4">
    <location>
        <position position="1"/>
    </location>
</feature>
<feature type="chain" id="PRO_0000426738" description="Adenylate cyclase CyaB">
    <location>
        <begin position="2"/>
        <end position="191"/>
    </location>
</feature>
<feature type="domain" description="CYTH" evidence="2">
    <location>
        <begin position="9"/>
        <end position="180"/>
    </location>
</feature>
<feature type="active site" description="Proton acceptor" evidence="1">
    <location>
        <position position="46"/>
    </location>
</feature>
<organism>
    <name type="scientific">Aeromonas hydrophila</name>
    <dbReference type="NCBI Taxonomy" id="644"/>
    <lineage>
        <taxon>Bacteria</taxon>
        <taxon>Pseudomonadati</taxon>
        <taxon>Pseudomonadota</taxon>
        <taxon>Gammaproteobacteria</taxon>
        <taxon>Aeromonadales</taxon>
        <taxon>Aeromonadaceae</taxon>
        <taxon>Aeromonas</taxon>
    </lineage>
</organism>
<reference key="1">
    <citation type="journal article" date="1998" name="J. Bacteriol.">
        <title>Aeromonas hydrophila adenylyl cyclase 2: a new class of adenylyl cyclases with thermophilic properties and sequence similarities to proteins from hyperthermophilic archaebacteria.</title>
        <authorList>
            <person name="Sismeiro O."/>
            <person name="Trotot P."/>
            <person name="Biville F."/>
            <person name="Vivares C."/>
            <person name="Danchin A."/>
        </authorList>
    </citation>
    <scope>NUCLEOTIDE SEQUENCE [GENOMIC DNA]</scope>
    <scope>PROTEIN SEQUENCE OF 2-6</scope>
    <scope>FUNCTION</scope>
    <scope>BIOPHYSICOCHEMICAL PROPERTIES</scope>
    <scope>DISRUPTION PHENOTYPE</scope>
    <scope>ACTIVITY REGULATION</scope>
    <source>
        <strain>strain 218</strain>
    </source>
</reference>
<reference key="2">
    <citation type="journal article" date="2012" name="PLoS ONE">
        <title>High inorganic triphosphatase activities in bacteria and mammalian cells: identification of the enzymes involved.</title>
        <authorList>
            <person name="Kohn G."/>
            <person name="Delvaux D."/>
            <person name="Lakaye B."/>
            <person name="Servais A.C."/>
            <person name="Scholer G."/>
            <person name="Fillet M."/>
            <person name="Elias B."/>
            <person name="Derochette J.M."/>
            <person name="Crommen J."/>
            <person name="Wins P."/>
            <person name="Bettendorff L."/>
        </authorList>
    </citation>
    <scope>FUNCTION AS A TRIPHOSPHATASE</scope>
    <scope>CATALYTIC ACTIVITY</scope>
</reference>
<dbReference type="EC" id="4.6.1.1"/>
<dbReference type="EMBL" id="AJ223730">
    <property type="protein sequence ID" value="CAA11532.1"/>
    <property type="molecule type" value="Genomic_DNA"/>
</dbReference>
<dbReference type="SMR" id="O69199"/>
<dbReference type="GO" id="GO:0005737">
    <property type="term" value="C:cytoplasm"/>
    <property type="evidence" value="ECO:0007669"/>
    <property type="project" value="UniProtKB-SubCell"/>
</dbReference>
<dbReference type="GO" id="GO:0004016">
    <property type="term" value="F:adenylate cyclase activity"/>
    <property type="evidence" value="ECO:0000314"/>
    <property type="project" value="UniProtKB"/>
</dbReference>
<dbReference type="GO" id="GO:0005524">
    <property type="term" value="F:ATP binding"/>
    <property type="evidence" value="ECO:0007669"/>
    <property type="project" value="UniProtKB-KW"/>
</dbReference>
<dbReference type="GO" id="GO:0006171">
    <property type="term" value="P:cAMP biosynthetic process"/>
    <property type="evidence" value="ECO:0007669"/>
    <property type="project" value="UniProtKB-KW"/>
</dbReference>
<dbReference type="CDD" id="cd07890">
    <property type="entry name" value="CYTH-like_AC_IV-like"/>
    <property type="match status" value="1"/>
</dbReference>
<dbReference type="FunFam" id="2.40.320.10:FF:000016">
    <property type="entry name" value="Adenylate cyclase CyaB"/>
    <property type="match status" value="1"/>
</dbReference>
<dbReference type="Gene3D" id="2.40.320.10">
    <property type="entry name" value="Hypothetical Protein Pfu-838710-001"/>
    <property type="match status" value="1"/>
</dbReference>
<dbReference type="InterPro" id="IPR008173">
    <property type="entry name" value="Adenylyl_cyclase_CyaB"/>
</dbReference>
<dbReference type="InterPro" id="IPR033469">
    <property type="entry name" value="CYTH-like_dom_sf"/>
</dbReference>
<dbReference type="InterPro" id="IPR023577">
    <property type="entry name" value="CYTH_domain"/>
</dbReference>
<dbReference type="NCBIfam" id="TIGR00318">
    <property type="entry name" value="cyaB"/>
    <property type="match status" value="1"/>
</dbReference>
<dbReference type="PANTHER" id="PTHR21028:SF2">
    <property type="entry name" value="CYTH DOMAIN-CONTAINING PROTEIN"/>
    <property type="match status" value="1"/>
</dbReference>
<dbReference type="PANTHER" id="PTHR21028">
    <property type="entry name" value="SI:CH211-156B7.4"/>
    <property type="match status" value="1"/>
</dbReference>
<dbReference type="Pfam" id="PF01928">
    <property type="entry name" value="CYTH"/>
    <property type="match status" value="1"/>
</dbReference>
<dbReference type="SMART" id="SM01118">
    <property type="entry name" value="CYTH"/>
    <property type="match status" value="1"/>
</dbReference>
<dbReference type="SUPFAM" id="SSF55154">
    <property type="entry name" value="CYTH-like phosphatases"/>
    <property type="match status" value="1"/>
</dbReference>
<dbReference type="PROSITE" id="PS51707">
    <property type="entry name" value="CYTH"/>
    <property type="match status" value="1"/>
</dbReference>
<gene>
    <name type="primary">cyaB</name>
</gene>
<protein>
    <recommendedName>
        <fullName>Adenylate cyclase CyaB</fullName>
        <ecNumber>4.6.1.1</ecNumber>
    </recommendedName>
    <alternativeName>
        <fullName>ATP pyrophosphate-lyase</fullName>
    </alternativeName>
    <alternativeName>
        <fullName>Adenylyl cyclase</fullName>
    </alternativeName>
</protein>
<name>CYAB_AERHY</name>
<keyword id="KW-0067">ATP-binding</keyword>
<keyword id="KW-0115">cAMP biosynthesis</keyword>
<keyword id="KW-0963">Cytoplasm</keyword>
<keyword id="KW-0903">Direct protein sequencing</keyword>
<keyword id="KW-0456">Lyase</keyword>
<keyword id="KW-0547">Nucleotide-binding</keyword>
<evidence type="ECO:0000250" key="1"/>
<evidence type="ECO:0000255" key="2">
    <source>
        <dbReference type="PROSITE-ProRule" id="PRU01044"/>
    </source>
</evidence>
<evidence type="ECO:0000269" key="3">
    <source>
    </source>
</evidence>
<evidence type="ECO:0000269" key="4">
    <source>
    </source>
</evidence>
<evidence type="ECO:0000305" key="5"/>
<comment type="function">
    <text evidence="3 4">In vitro, CyaB catalyzes the biosynthesis of cyclic AMP (cAMP) from ATP. It seems that under the physiological conditions CyaB has no function in cAMP processes. In vitro, it is also able to hydrolyze substrates such as thiamine triphosphate (ThTP) and inorganic triphosphate (PPPi) at a low rate. It has a slight preference for ThTP over ATP and PPPi in the presence of manganese ions. This PPPase activity is probably not of physiological importance.</text>
</comment>
<comment type="catalytic activity">
    <reaction evidence="3">
        <text>ATP = 3',5'-cyclic AMP + diphosphate</text>
        <dbReference type="Rhea" id="RHEA:15389"/>
        <dbReference type="ChEBI" id="CHEBI:30616"/>
        <dbReference type="ChEBI" id="CHEBI:33019"/>
        <dbReference type="ChEBI" id="CHEBI:58165"/>
        <dbReference type="EC" id="4.6.1.1"/>
    </reaction>
</comment>
<comment type="activity regulation">
    <text evidence="4">Inhibited by GTP.</text>
</comment>
<comment type="biophysicochemical properties">
    <phDependence>
        <text evidence="4">Optimum pH is 9.5.</text>
    </phDependence>
    <temperatureDependence>
        <text evidence="4">Optimum temperature is 65 degrees Celsius.</text>
    </temperatureDependence>
</comment>
<comment type="subcellular location">
    <subcellularLocation>
        <location evidence="1">Cytoplasm</location>
    </subcellularLocation>
</comment>
<comment type="disruption phenotype">
    <text evidence="4">Cells lacking this gene show no impair of cAMP biosynthesis.</text>
</comment>
<comment type="similarity">
    <text evidence="5">Belongs to the adenylyl cyclase CyaB family.</text>
</comment>
<proteinExistence type="evidence at protein level"/>